<comment type="catalytic activity">
    <reaction>
        <text>1-(5-phospho-beta-D-ribosyl)-ATP + H2O = 1-(5-phospho-beta-D-ribosyl)-5'-AMP + diphosphate + H(+)</text>
        <dbReference type="Rhea" id="RHEA:22828"/>
        <dbReference type="ChEBI" id="CHEBI:15377"/>
        <dbReference type="ChEBI" id="CHEBI:15378"/>
        <dbReference type="ChEBI" id="CHEBI:33019"/>
        <dbReference type="ChEBI" id="CHEBI:59457"/>
        <dbReference type="ChEBI" id="CHEBI:73183"/>
        <dbReference type="EC" id="3.6.1.31"/>
    </reaction>
</comment>
<comment type="catalytic activity">
    <reaction>
        <text>1-(5-phospho-beta-D-ribosyl)-5'-AMP + H2O = 1-(5-phospho-beta-D-ribosyl)-5-[(5-phospho-beta-D-ribosylamino)methylideneamino]imidazole-4-carboxamide</text>
        <dbReference type="Rhea" id="RHEA:20049"/>
        <dbReference type="ChEBI" id="CHEBI:15377"/>
        <dbReference type="ChEBI" id="CHEBI:58435"/>
        <dbReference type="ChEBI" id="CHEBI:59457"/>
        <dbReference type="EC" id="3.5.4.19"/>
    </reaction>
</comment>
<comment type="pathway">
    <text>Amino-acid biosynthesis; L-histidine biosynthesis; L-histidine from 5-phospho-alpha-D-ribose 1-diphosphate: step 2/9.</text>
</comment>
<comment type="pathway">
    <text>Amino-acid biosynthesis; L-histidine biosynthesis; L-histidine from 5-phospho-alpha-D-ribose 1-diphosphate: step 3/9.</text>
</comment>
<comment type="subcellular location">
    <subcellularLocation>
        <location evidence="1">Cytoplasm</location>
    </subcellularLocation>
</comment>
<comment type="similarity">
    <text evidence="2">In the N-terminal section; belongs to the PRA-CH family.</text>
</comment>
<comment type="similarity">
    <text evidence="2">In the C-terminal section; belongs to the PRA-PH family.</text>
</comment>
<reference key="1">
    <citation type="journal article" date="1999" name="Nature">
        <title>Evidence for lateral gene transfer between Archaea and Bacteria from genome sequence of Thermotoga maritima.</title>
        <authorList>
            <person name="Nelson K.E."/>
            <person name="Clayton R.A."/>
            <person name="Gill S.R."/>
            <person name="Gwinn M.L."/>
            <person name="Dodson R.J."/>
            <person name="Haft D.H."/>
            <person name="Hickey E.K."/>
            <person name="Peterson J.D."/>
            <person name="Nelson W.C."/>
            <person name="Ketchum K.A."/>
            <person name="McDonald L.A."/>
            <person name="Utterback T.R."/>
            <person name="Malek J.A."/>
            <person name="Linher K.D."/>
            <person name="Garrett M.M."/>
            <person name="Stewart A.M."/>
            <person name="Cotton M.D."/>
            <person name="Pratt M.S."/>
            <person name="Phillips C.A."/>
            <person name="Richardson D.L."/>
            <person name="Heidelberg J.F."/>
            <person name="Sutton G.G."/>
            <person name="Fleischmann R.D."/>
            <person name="Eisen J.A."/>
            <person name="White O."/>
            <person name="Salzberg S.L."/>
            <person name="Smith H.O."/>
            <person name="Venter J.C."/>
            <person name="Fraser C.M."/>
        </authorList>
    </citation>
    <scope>NUCLEOTIDE SEQUENCE [LARGE SCALE GENOMIC DNA]</scope>
    <source>
        <strain>ATCC 43589 / DSM 3109 / JCM 10099 / NBRC 100826 / MSB8</strain>
    </source>
</reference>
<accession>Q9X0C5</accession>
<proteinExistence type="inferred from homology"/>
<keyword id="KW-0028">Amino-acid biosynthesis</keyword>
<keyword id="KW-0067">ATP-binding</keyword>
<keyword id="KW-0963">Cytoplasm</keyword>
<keyword id="KW-0368">Histidine biosynthesis</keyword>
<keyword id="KW-0378">Hydrolase</keyword>
<keyword id="KW-0511">Multifunctional enzyme</keyword>
<keyword id="KW-0547">Nucleotide-binding</keyword>
<keyword id="KW-1185">Reference proteome</keyword>
<gene>
    <name type="primary">hisI</name>
    <name type="synonym">hisIE</name>
    <name type="ordered locus">TM_1035</name>
</gene>
<dbReference type="EC" id="3.5.4.19"/>
<dbReference type="EC" id="3.6.1.31"/>
<dbReference type="EMBL" id="AE000512">
    <property type="protein sequence ID" value="AAD36112.1"/>
    <property type="molecule type" value="Genomic_DNA"/>
</dbReference>
<dbReference type="PIR" id="B72304">
    <property type="entry name" value="B72304"/>
</dbReference>
<dbReference type="RefSeq" id="NP_228841.1">
    <property type="nucleotide sequence ID" value="NC_000853.1"/>
</dbReference>
<dbReference type="SMR" id="Q9X0C5"/>
<dbReference type="FunCoup" id="Q9X0C5">
    <property type="interactions" value="159"/>
</dbReference>
<dbReference type="STRING" id="243274.TM_1035"/>
<dbReference type="PaxDb" id="243274-THEMA_09185"/>
<dbReference type="DNASU" id="897097"/>
<dbReference type="EnsemblBacteria" id="AAD36112">
    <property type="protein sequence ID" value="AAD36112"/>
    <property type="gene ID" value="TM_1035"/>
</dbReference>
<dbReference type="KEGG" id="tma:TM1035"/>
<dbReference type="KEGG" id="tmi:THEMA_09185"/>
<dbReference type="PATRIC" id="fig|243274.18.peg.1780"/>
<dbReference type="eggNOG" id="COG0139">
    <property type="taxonomic scope" value="Bacteria"/>
</dbReference>
<dbReference type="eggNOG" id="COG0140">
    <property type="taxonomic scope" value="Bacteria"/>
</dbReference>
<dbReference type="InParanoid" id="Q9X0C5"/>
<dbReference type="OrthoDB" id="9795769at2"/>
<dbReference type="UniPathway" id="UPA00031">
    <property type="reaction ID" value="UER00007"/>
</dbReference>
<dbReference type="UniPathway" id="UPA00031">
    <property type="reaction ID" value="UER00008"/>
</dbReference>
<dbReference type="Proteomes" id="UP000008183">
    <property type="component" value="Chromosome"/>
</dbReference>
<dbReference type="GO" id="GO:0005737">
    <property type="term" value="C:cytoplasm"/>
    <property type="evidence" value="ECO:0007669"/>
    <property type="project" value="UniProtKB-SubCell"/>
</dbReference>
<dbReference type="GO" id="GO:0005524">
    <property type="term" value="F:ATP binding"/>
    <property type="evidence" value="ECO:0007669"/>
    <property type="project" value="UniProtKB-KW"/>
</dbReference>
<dbReference type="GO" id="GO:0004635">
    <property type="term" value="F:phosphoribosyl-AMP cyclohydrolase activity"/>
    <property type="evidence" value="ECO:0007669"/>
    <property type="project" value="UniProtKB-UniRule"/>
</dbReference>
<dbReference type="GO" id="GO:0004636">
    <property type="term" value="F:phosphoribosyl-ATP diphosphatase activity"/>
    <property type="evidence" value="ECO:0007669"/>
    <property type="project" value="UniProtKB-UniRule"/>
</dbReference>
<dbReference type="GO" id="GO:0000105">
    <property type="term" value="P:L-histidine biosynthetic process"/>
    <property type="evidence" value="ECO:0007669"/>
    <property type="project" value="UniProtKB-UniRule"/>
</dbReference>
<dbReference type="CDD" id="cd11534">
    <property type="entry name" value="NTP-PPase_HisIE_like"/>
    <property type="match status" value="1"/>
</dbReference>
<dbReference type="FunFam" id="1.10.287.1080:FF:000002">
    <property type="entry name" value="Histidine biosynthesis bifunctional protein HisIE"/>
    <property type="match status" value="1"/>
</dbReference>
<dbReference type="FunFam" id="3.10.20.810:FF:000001">
    <property type="entry name" value="Histidine biosynthesis bifunctional protein HisIE"/>
    <property type="match status" value="1"/>
</dbReference>
<dbReference type="Gene3D" id="1.10.287.1080">
    <property type="entry name" value="MazG-like"/>
    <property type="match status" value="1"/>
</dbReference>
<dbReference type="Gene3D" id="3.10.20.810">
    <property type="entry name" value="Phosphoribosyl-AMP cyclohydrolase"/>
    <property type="match status" value="1"/>
</dbReference>
<dbReference type="HAMAP" id="MF_01020">
    <property type="entry name" value="HisE"/>
    <property type="match status" value="1"/>
</dbReference>
<dbReference type="HAMAP" id="MF_01019">
    <property type="entry name" value="HisIE"/>
    <property type="match status" value="1"/>
</dbReference>
<dbReference type="InterPro" id="IPR023019">
    <property type="entry name" value="His_synth_HisIE"/>
</dbReference>
<dbReference type="InterPro" id="IPR008179">
    <property type="entry name" value="HisE"/>
</dbReference>
<dbReference type="InterPro" id="IPR021130">
    <property type="entry name" value="PRib-ATP_PPHydrolase-like"/>
</dbReference>
<dbReference type="InterPro" id="IPR002496">
    <property type="entry name" value="PRib_AMP_CycHydrolase_dom"/>
</dbReference>
<dbReference type="InterPro" id="IPR038019">
    <property type="entry name" value="PRib_AMP_CycHydrolase_sf"/>
</dbReference>
<dbReference type="NCBIfam" id="TIGR03188">
    <property type="entry name" value="histidine_hisI"/>
    <property type="match status" value="1"/>
</dbReference>
<dbReference type="NCBIfam" id="NF002747">
    <property type="entry name" value="PRK02759.1"/>
    <property type="match status" value="1"/>
</dbReference>
<dbReference type="PANTHER" id="PTHR42945">
    <property type="entry name" value="HISTIDINE BIOSYNTHESIS BIFUNCTIONAL PROTEIN"/>
    <property type="match status" value="1"/>
</dbReference>
<dbReference type="PANTHER" id="PTHR42945:SF1">
    <property type="entry name" value="HISTIDINE BIOSYNTHESIS BIFUNCTIONAL PROTEIN HIS7"/>
    <property type="match status" value="1"/>
</dbReference>
<dbReference type="Pfam" id="PF01502">
    <property type="entry name" value="PRA-CH"/>
    <property type="match status" value="1"/>
</dbReference>
<dbReference type="Pfam" id="PF01503">
    <property type="entry name" value="PRA-PH"/>
    <property type="match status" value="1"/>
</dbReference>
<dbReference type="SUPFAM" id="SSF101386">
    <property type="entry name" value="all-alpha NTP pyrophosphatases"/>
    <property type="match status" value="1"/>
</dbReference>
<dbReference type="SUPFAM" id="SSF141734">
    <property type="entry name" value="HisI-like"/>
    <property type="match status" value="1"/>
</dbReference>
<feature type="chain" id="PRO_0000136442" description="Histidine biosynthesis bifunctional protein HisIE">
    <location>
        <begin position="1"/>
        <end position="197"/>
    </location>
</feature>
<feature type="region of interest" description="Phosphoribosyl-AMP cyclohydrolase">
    <location>
        <begin position="1"/>
        <end position="108"/>
    </location>
</feature>
<feature type="region of interest" description="Phosphoribosyl-ATP pyrophosphohydrolase">
    <location>
        <begin position="109"/>
        <end position="197"/>
    </location>
</feature>
<protein>
    <recommendedName>
        <fullName>Histidine biosynthesis bifunctional protein HisIE</fullName>
    </recommendedName>
    <domain>
        <recommendedName>
            <fullName>Phosphoribosyl-AMP cyclohydrolase</fullName>
            <shortName>PRA-CH</shortName>
            <ecNumber>3.5.4.19</ecNumber>
        </recommendedName>
    </domain>
    <domain>
        <recommendedName>
            <fullName>Phosphoribosyl-ATP pyrophosphatase</fullName>
            <shortName>PRA-PH</shortName>
            <ecNumber>3.6.1.31</ecNumber>
        </recommendedName>
    </domain>
</protein>
<evidence type="ECO:0000250" key="1"/>
<evidence type="ECO:0000305" key="2"/>
<sequence>MMTLYPVVVQERTTGEVLMLAYANEEALELTKKTGYAHFFSRERQKIWKKGETSGNTMRVVEIRRDCDDDAYLYIVDFPEDKVACHTGNRSCFFKVEHRFEETGSPTFWLELYRLVRKRKEEMPEGSYTVKLFKEGKGKIAKKFGEEAVEVITGYLQNDRENLVWEIADMMYHLTVLMADAGVTVQDVMRELEKRRK</sequence>
<name>HIS2_THEMA</name>
<organism>
    <name type="scientific">Thermotoga maritima (strain ATCC 43589 / DSM 3109 / JCM 10099 / NBRC 100826 / MSB8)</name>
    <dbReference type="NCBI Taxonomy" id="243274"/>
    <lineage>
        <taxon>Bacteria</taxon>
        <taxon>Thermotogati</taxon>
        <taxon>Thermotogota</taxon>
        <taxon>Thermotogae</taxon>
        <taxon>Thermotogales</taxon>
        <taxon>Thermotogaceae</taxon>
        <taxon>Thermotoga</taxon>
    </lineage>
</organism>